<keyword id="KW-0025">Alternative splicing</keyword>
<keyword id="KW-0143">Chaperone</keyword>
<keyword id="KW-0150">Chloroplast</keyword>
<keyword id="KW-0903">Direct protein sequencing</keyword>
<keyword id="KW-1015">Disulfide bond</keyword>
<keyword id="KW-0413">Isomerase</keyword>
<keyword id="KW-0934">Plastid</keyword>
<keyword id="KW-1185">Reference proteome</keyword>
<keyword id="KW-0697">Rotamase</keyword>
<keyword id="KW-0809">Transit peptide</keyword>
<dbReference type="EC" id="5.2.1.8"/>
<dbReference type="EMBL" id="L14845">
    <property type="protein sequence ID" value="AAA20048.1"/>
    <property type="molecule type" value="mRNA"/>
</dbReference>
<dbReference type="EMBL" id="U42724">
    <property type="protein sequence ID" value="AAB96831.1"/>
    <property type="molecule type" value="Genomic_DNA"/>
</dbReference>
<dbReference type="EMBL" id="AL138642">
    <property type="protein sequence ID" value="CAB71910.1"/>
    <property type="molecule type" value="Genomic_DNA"/>
</dbReference>
<dbReference type="EMBL" id="CP002686">
    <property type="protein sequence ID" value="AEE80297.1"/>
    <property type="molecule type" value="Genomic_DNA"/>
</dbReference>
<dbReference type="EMBL" id="AF325026">
    <property type="protein sequence ID" value="AAG40378.1"/>
    <property type="molecule type" value="mRNA"/>
</dbReference>
<dbReference type="EMBL" id="AY059843">
    <property type="protein sequence ID" value="AAL24325.1"/>
    <property type="molecule type" value="mRNA"/>
</dbReference>
<dbReference type="EMBL" id="AY093284">
    <property type="protein sequence ID" value="AAM13283.1"/>
    <property type="molecule type" value="mRNA"/>
</dbReference>
<dbReference type="EMBL" id="AY086899">
    <property type="protein sequence ID" value="AAM63944.1"/>
    <property type="molecule type" value="mRNA"/>
</dbReference>
<dbReference type="PIR" id="B53422">
    <property type="entry name" value="B53422"/>
</dbReference>
<dbReference type="RefSeq" id="NP_191762.1">
    <molecule id="P34791-1"/>
    <property type="nucleotide sequence ID" value="NM_116068.5"/>
</dbReference>
<dbReference type="SMR" id="P34791"/>
<dbReference type="BioGRID" id="10690">
    <property type="interactions" value="7"/>
</dbReference>
<dbReference type="DIP" id="DIP-32746N"/>
<dbReference type="FunCoup" id="P34791">
    <property type="interactions" value="2774"/>
</dbReference>
<dbReference type="IntAct" id="P34791">
    <property type="interactions" value="4"/>
</dbReference>
<dbReference type="STRING" id="3702.P34791"/>
<dbReference type="MetOSite" id="P34791"/>
<dbReference type="PaxDb" id="3702-AT3G62030.2"/>
<dbReference type="EnsemblPlants" id="AT3G62030.1">
    <molecule id="P34791-1"/>
    <property type="protein sequence ID" value="AT3G62030.1"/>
    <property type="gene ID" value="AT3G62030"/>
</dbReference>
<dbReference type="GeneID" id="825376"/>
<dbReference type="Gramene" id="AT3G62030.1">
    <molecule id="P34791-1"/>
    <property type="protein sequence ID" value="AT3G62030.1"/>
    <property type="gene ID" value="AT3G62030"/>
</dbReference>
<dbReference type="KEGG" id="ath:AT3G62030"/>
<dbReference type="Araport" id="AT3G62030"/>
<dbReference type="TAIR" id="AT3G62030">
    <property type="gene designation" value="ROC4"/>
</dbReference>
<dbReference type="eggNOG" id="KOG0880">
    <property type="taxonomic scope" value="Eukaryota"/>
</dbReference>
<dbReference type="InParanoid" id="P34791"/>
<dbReference type="OrthoDB" id="193499at2759"/>
<dbReference type="PhylomeDB" id="P34791"/>
<dbReference type="BRENDA" id="5.2.1.8">
    <property type="organism ID" value="399"/>
</dbReference>
<dbReference type="CD-CODE" id="4299E36E">
    <property type="entry name" value="Nucleolus"/>
</dbReference>
<dbReference type="PRO" id="PR:P34791"/>
<dbReference type="Proteomes" id="UP000006548">
    <property type="component" value="Chromosome 3"/>
</dbReference>
<dbReference type="ExpressionAtlas" id="P34791">
    <property type="expression patterns" value="baseline and differential"/>
</dbReference>
<dbReference type="GO" id="GO:0009570">
    <property type="term" value="C:chloroplast stroma"/>
    <property type="evidence" value="ECO:0007669"/>
    <property type="project" value="UniProtKB-SubCell"/>
</dbReference>
<dbReference type="GO" id="GO:0003755">
    <property type="term" value="F:peptidyl-prolyl cis-trans isomerase activity"/>
    <property type="evidence" value="ECO:0007669"/>
    <property type="project" value="UniProtKB-KW"/>
</dbReference>
<dbReference type="GO" id="GO:0006457">
    <property type="term" value="P:protein folding"/>
    <property type="evidence" value="ECO:0007669"/>
    <property type="project" value="InterPro"/>
</dbReference>
<dbReference type="CDD" id="cd01926">
    <property type="entry name" value="cyclophilin_ABH_like"/>
    <property type="match status" value="1"/>
</dbReference>
<dbReference type="FunFam" id="2.40.100.10:FF:000001">
    <property type="entry name" value="Peptidyl-prolyl cis-trans isomerase"/>
    <property type="match status" value="1"/>
</dbReference>
<dbReference type="Gene3D" id="2.40.100.10">
    <property type="entry name" value="Cyclophilin-like"/>
    <property type="match status" value="1"/>
</dbReference>
<dbReference type="InterPro" id="IPR029000">
    <property type="entry name" value="Cyclophilin-like_dom_sf"/>
</dbReference>
<dbReference type="InterPro" id="IPR020892">
    <property type="entry name" value="Cyclophilin-type_PPIase_CS"/>
</dbReference>
<dbReference type="InterPro" id="IPR002130">
    <property type="entry name" value="Cyclophilin-type_PPIase_dom"/>
</dbReference>
<dbReference type="PANTHER" id="PTHR11071">
    <property type="entry name" value="PEPTIDYL-PROLYL CIS-TRANS ISOMERASE"/>
    <property type="match status" value="1"/>
</dbReference>
<dbReference type="PANTHER" id="PTHR11071:SF420">
    <property type="entry name" value="PEPTIDYL-PROLYL CIS-TRANS ISOMERASE CYP20-3, CHLOROPLASTIC"/>
    <property type="match status" value="1"/>
</dbReference>
<dbReference type="Pfam" id="PF00160">
    <property type="entry name" value="Pro_isomerase"/>
    <property type="match status" value="1"/>
</dbReference>
<dbReference type="PRINTS" id="PR00153">
    <property type="entry name" value="CSAPPISMRASE"/>
</dbReference>
<dbReference type="SUPFAM" id="SSF50891">
    <property type="entry name" value="Cyclophilin-like"/>
    <property type="match status" value="1"/>
</dbReference>
<dbReference type="PROSITE" id="PS00170">
    <property type="entry name" value="CSA_PPIASE_1"/>
    <property type="match status" value="1"/>
</dbReference>
<dbReference type="PROSITE" id="PS50072">
    <property type="entry name" value="CSA_PPIASE_2"/>
    <property type="match status" value="1"/>
</dbReference>
<feature type="transit peptide" description="Chloroplast" evidence="2">
    <location>
        <begin position="1"/>
        <end position="79"/>
    </location>
</feature>
<feature type="chain" id="PRO_0000025476" description="Peptidyl-prolyl cis-trans isomerase CYP20-3, chloroplastic">
    <location>
        <begin position="80"/>
        <end position="260"/>
    </location>
</feature>
<feature type="domain" description="PPIase cyclophilin-type" evidence="1">
    <location>
        <begin position="98"/>
        <end position="255"/>
    </location>
</feature>
<feature type="disulfide bond" evidence="3">
    <location>
        <begin position="131"/>
        <end position="248"/>
    </location>
</feature>
<feature type="disulfide bond" evidence="3">
    <location>
        <begin position="206"/>
        <end position="253"/>
    </location>
</feature>
<feature type="mutagenesis site" description="Reduced PPIase activity, lower sensitivity to redox regulation; when associated with S-248." evidence="3">
    <original>C</original>
    <variation>S</variation>
    <location>
        <position position="131"/>
    </location>
</feature>
<feature type="mutagenesis site" description="Reduced PPIase activity, lower sensitivity to redox regulation; when associated with S-253." evidence="3">
    <original>C</original>
    <variation>S</variation>
    <location>
        <position position="206"/>
    </location>
</feature>
<feature type="mutagenesis site" description="Reduced PPIase activity, lower sensitivity to redox regulation; when associated with S-131." evidence="3">
    <original>C</original>
    <variation>S</variation>
    <location>
        <position position="248"/>
    </location>
</feature>
<feature type="mutagenesis site" description="Reduced PPIase activity, lower sensitivity to redox regulation; when associated with S-206." evidence="3">
    <original>C</original>
    <variation>S</variation>
    <location>
        <position position="253"/>
    </location>
</feature>
<feature type="sequence conflict" description="In Ref. 6; AAM63944." evidence="10" ref="6">
    <original>I</original>
    <variation>T</variation>
    <location>
        <position position="87"/>
    </location>
</feature>
<feature type="sequence conflict" description="In Ref. 5; AAG40378." evidence="10" ref="5">
    <original>Q</original>
    <variation>K</variation>
    <location>
        <position position="202"/>
    </location>
</feature>
<name>CP20C_ARATH</name>
<reference key="1">
    <citation type="journal article" date="1994" name="J. Biol. Chem.">
        <title>Cloning and characterization of chloroplast and cytosolic forms of cyclophilin from Arabidopsis thaliana.</title>
        <authorList>
            <person name="Lippuner V."/>
            <person name="Chou I.T."/>
            <person name="Scott S.V."/>
            <person name="Ettinger W.F."/>
            <person name="Theg S.M."/>
            <person name="Gasser C.S."/>
        </authorList>
    </citation>
    <scope>NUCLEOTIDE SEQUENCE [MRNA]</scope>
    <scope>SUBCELLULAR LOCATION</scope>
    <scope>TISSUE SPECIFICITY</scope>
    <source>
        <strain>cv. Columbia</strain>
        <tissue>Leaf</tissue>
    </source>
</reference>
<reference key="2">
    <citation type="journal article" date="1997" name="Plant Mol. Biol.">
        <title>Characterization of the cyclophilin gene family of Arabidopsis thaliana and phylogenetic analysis of known cyclophilin proteins.</title>
        <authorList>
            <person name="Chou I.T."/>
            <person name="Gasser C.S."/>
        </authorList>
    </citation>
    <scope>NUCLEOTIDE SEQUENCE [GENOMIC DNA]</scope>
    <scope>INDUCTION</scope>
    <source>
        <strain>cv. Columbia</strain>
    </source>
</reference>
<reference key="3">
    <citation type="journal article" date="2000" name="Nature">
        <title>Sequence and analysis of chromosome 3 of the plant Arabidopsis thaliana.</title>
        <authorList>
            <person name="Salanoubat M."/>
            <person name="Lemcke K."/>
            <person name="Rieger M."/>
            <person name="Ansorge W."/>
            <person name="Unseld M."/>
            <person name="Fartmann B."/>
            <person name="Valle G."/>
            <person name="Bloecker H."/>
            <person name="Perez-Alonso M."/>
            <person name="Obermaier B."/>
            <person name="Delseny M."/>
            <person name="Boutry M."/>
            <person name="Grivell L.A."/>
            <person name="Mache R."/>
            <person name="Puigdomenech P."/>
            <person name="De Simone V."/>
            <person name="Choisne N."/>
            <person name="Artiguenave F."/>
            <person name="Robert C."/>
            <person name="Brottier P."/>
            <person name="Wincker P."/>
            <person name="Cattolico L."/>
            <person name="Weissenbach J."/>
            <person name="Saurin W."/>
            <person name="Quetier F."/>
            <person name="Schaefer M."/>
            <person name="Mueller-Auer S."/>
            <person name="Gabel C."/>
            <person name="Fuchs M."/>
            <person name="Benes V."/>
            <person name="Wurmbach E."/>
            <person name="Drzonek H."/>
            <person name="Erfle H."/>
            <person name="Jordan N."/>
            <person name="Bangert S."/>
            <person name="Wiedelmann R."/>
            <person name="Kranz H."/>
            <person name="Voss H."/>
            <person name="Holland R."/>
            <person name="Brandt P."/>
            <person name="Nyakatura G."/>
            <person name="Vezzi A."/>
            <person name="D'Angelo M."/>
            <person name="Pallavicini A."/>
            <person name="Toppo S."/>
            <person name="Simionati B."/>
            <person name="Conrad A."/>
            <person name="Hornischer K."/>
            <person name="Kauer G."/>
            <person name="Loehnert T.-H."/>
            <person name="Nordsiek G."/>
            <person name="Reichelt J."/>
            <person name="Scharfe M."/>
            <person name="Schoen O."/>
            <person name="Bargues M."/>
            <person name="Terol J."/>
            <person name="Climent J."/>
            <person name="Navarro P."/>
            <person name="Collado C."/>
            <person name="Perez-Perez A."/>
            <person name="Ottenwaelder B."/>
            <person name="Duchemin D."/>
            <person name="Cooke R."/>
            <person name="Laudie M."/>
            <person name="Berger-Llauro C."/>
            <person name="Purnelle B."/>
            <person name="Masuy D."/>
            <person name="de Haan M."/>
            <person name="Maarse A.C."/>
            <person name="Alcaraz J.-P."/>
            <person name="Cottet A."/>
            <person name="Casacuberta E."/>
            <person name="Monfort A."/>
            <person name="Argiriou A."/>
            <person name="Flores M."/>
            <person name="Liguori R."/>
            <person name="Vitale D."/>
            <person name="Mannhaupt G."/>
            <person name="Haase D."/>
            <person name="Schoof H."/>
            <person name="Rudd S."/>
            <person name="Zaccaria P."/>
            <person name="Mewes H.-W."/>
            <person name="Mayer K.F.X."/>
            <person name="Kaul S."/>
            <person name="Town C.D."/>
            <person name="Koo H.L."/>
            <person name="Tallon L.J."/>
            <person name="Jenkins J."/>
            <person name="Rooney T."/>
            <person name="Rizzo M."/>
            <person name="Walts A."/>
            <person name="Utterback T."/>
            <person name="Fujii C.Y."/>
            <person name="Shea T.P."/>
            <person name="Creasy T.H."/>
            <person name="Haas B."/>
            <person name="Maiti R."/>
            <person name="Wu D."/>
            <person name="Peterson J."/>
            <person name="Van Aken S."/>
            <person name="Pai G."/>
            <person name="Militscher J."/>
            <person name="Sellers P."/>
            <person name="Gill J.E."/>
            <person name="Feldblyum T.V."/>
            <person name="Preuss D."/>
            <person name="Lin X."/>
            <person name="Nierman W.C."/>
            <person name="Salzberg S.L."/>
            <person name="White O."/>
            <person name="Venter J.C."/>
            <person name="Fraser C.M."/>
            <person name="Kaneko T."/>
            <person name="Nakamura Y."/>
            <person name="Sato S."/>
            <person name="Kato T."/>
            <person name="Asamizu E."/>
            <person name="Sasamoto S."/>
            <person name="Kimura T."/>
            <person name="Idesawa K."/>
            <person name="Kawashima K."/>
            <person name="Kishida Y."/>
            <person name="Kiyokawa C."/>
            <person name="Kohara M."/>
            <person name="Matsumoto M."/>
            <person name="Matsuno A."/>
            <person name="Muraki A."/>
            <person name="Nakayama S."/>
            <person name="Nakazaki N."/>
            <person name="Shinpo S."/>
            <person name="Takeuchi C."/>
            <person name="Wada T."/>
            <person name="Watanabe A."/>
            <person name="Yamada M."/>
            <person name="Yasuda M."/>
            <person name="Tabata S."/>
        </authorList>
    </citation>
    <scope>NUCLEOTIDE SEQUENCE [LARGE SCALE GENOMIC DNA]</scope>
    <source>
        <strain>cv. Columbia</strain>
    </source>
</reference>
<reference key="4">
    <citation type="journal article" date="2017" name="Plant J.">
        <title>Araport11: a complete reannotation of the Arabidopsis thaliana reference genome.</title>
        <authorList>
            <person name="Cheng C.Y."/>
            <person name="Krishnakumar V."/>
            <person name="Chan A.P."/>
            <person name="Thibaud-Nissen F."/>
            <person name="Schobel S."/>
            <person name="Town C.D."/>
        </authorList>
    </citation>
    <scope>GENOME REANNOTATION</scope>
    <source>
        <strain>cv. Columbia</strain>
    </source>
</reference>
<reference key="5">
    <citation type="journal article" date="2003" name="Science">
        <title>Empirical analysis of transcriptional activity in the Arabidopsis genome.</title>
        <authorList>
            <person name="Yamada K."/>
            <person name="Lim J."/>
            <person name="Dale J.M."/>
            <person name="Chen H."/>
            <person name="Shinn P."/>
            <person name="Palm C.J."/>
            <person name="Southwick A.M."/>
            <person name="Wu H.C."/>
            <person name="Kim C.J."/>
            <person name="Nguyen M."/>
            <person name="Pham P.K."/>
            <person name="Cheuk R.F."/>
            <person name="Karlin-Newmann G."/>
            <person name="Liu S.X."/>
            <person name="Lam B."/>
            <person name="Sakano H."/>
            <person name="Wu T."/>
            <person name="Yu G."/>
            <person name="Miranda M."/>
            <person name="Quach H.L."/>
            <person name="Tripp M."/>
            <person name="Chang C.H."/>
            <person name="Lee J.M."/>
            <person name="Toriumi M.J."/>
            <person name="Chan M.M."/>
            <person name="Tang C.C."/>
            <person name="Onodera C.S."/>
            <person name="Deng J.M."/>
            <person name="Akiyama K."/>
            <person name="Ansari Y."/>
            <person name="Arakawa T."/>
            <person name="Banh J."/>
            <person name="Banno F."/>
            <person name="Bowser L."/>
            <person name="Brooks S.Y."/>
            <person name="Carninci P."/>
            <person name="Chao Q."/>
            <person name="Choy N."/>
            <person name="Enju A."/>
            <person name="Goldsmith A.D."/>
            <person name="Gurjal M."/>
            <person name="Hansen N.F."/>
            <person name="Hayashizaki Y."/>
            <person name="Johnson-Hopson C."/>
            <person name="Hsuan V.W."/>
            <person name="Iida K."/>
            <person name="Karnes M."/>
            <person name="Khan S."/>
            <person name="Koesema E."/>
            <person name="Ishida J."/>
            <person name="Jiang P.X."/>
            <person name="Jones T."/>
            <person name="Kawai J."/>
            <person name="Kamiya A."/>
            <person name="Meyers C."/>
            <person name="Nakajima M."/>
            <person name="Narusaka M."/>
            <person name="Seki M."/>
            <person name="Sakurai T."/>
            <person name="Satou M."/>
            <person name="Tamse R."/>
            <person name="Vaysberg M."/>
            <person name="Wallender E.K."/>
            <person name="Wong C."/>
            <person name="Yamamura Y."/>
            <person name="Yuan S."/>
            <person name="Shinozaki K."/>
            <person name="Davis R.W."/>
            <person name="Theologis A."/>
            <person name="Ecker J.R."/>
        </authorList>
    </citation>
    <scope>NUCLEOTIDE SEQUENCE [LARGE SCALE MRNA]</scope>
    <source>
        <strain>cv. Columbia</strain>
    </source>
</reference>
<reference key="6">
    <citation type="submission" date="2002-03" db="EMBL/GenBank/DDBJ databases">
        <title>Full-length cDNA from Arabidopsis thaliana.</title>
        <authorList>
            <person name="Brover V.V."/>
            <person name="Troukhan M.E."/>
            <person name="Alexandrov N.A."/>
            <person name="Lu Y.-P."/>
            <person name="Flavell R.B."/>
            <person name="Feldmann K.A."/>
        </authorList>
    </citation>
    <scope>NUCLEOTIDE SEQUENCE [LARGE SCALE MRNA]</scope>
</reference>
<reference key="7">
    <citation type="journal article" date="2003" name="J. Biol. Chem.">
        <title>Chloroplast cyclophilin is a target protein of thioredoxin. Thiol modulation of the peptidyl-prolyl cis-trans isomerase activity.</title>
        <authorList>
            <person name="Motohashi K."/>
            <person name="Koyama F."/>
            <person name="Nakanishi Y."/>
            <person name="Ueoka-Nakanishi H."/>
            <person name="Hisabori T."/>
        </authorList>
    </citation>
    <scope>PROTEIN SEQUENCE OF 117-125; 131-137; 183-192 AND 242-257</scope>
    <scope>ACTIVITY REGULATION</scope>
    <scope>DISULFIDE BONDS</scope>
    <scope>MUTAGENESIS OF CYS-131; CYS-206; CYS-248 AND CYS-253</scope>
</reference>
<reference key="8">
    <citation type="journal article" date="2002" name="J. Biol. Chem.">
        <title>Proteome map of the chloroplast lumen of Arabidopsis thaliana.</title>
        <authorList>
            <person name="Schubert M."/>
            <person name="Petersson U.A."/>
            <person name="Haas B.J."/>
            <person name="Funk C."/>
            <person name="Schroeder W.P."/>
            <person name="Kieselbach T."/>
        </authorList>
    </citation>
    <scope>PROTEIN SEQUENCE OF 80-94</scope>
    <scope>SUBCELLULAR LOCATION</scope>
</reference>
<reference key="9">
    <citation type="journal article" date="1998" name="Proc. Natl. Acad. Sci. U.S.A.">
        <title>Agrobacterium VirD2 protein interacts with plant host cyclophilins.</title>
        <authorList>
            <person name="Deng W."/>
            <person name="Chen L."/>
            <person name="Wood D.W."/>
            <person name="Metcalfe T."/>
            <person name="Liang X."/>
            <person name="Gordon M.P."/>
            <person name="Comai L."/>
            <person name="Nester E.W."/>
        </authorList>
    </citation>
    <scope>INTERACTION WITH AGROBACTERIUM VIRD2</scope>
</reference>
<reference key="10">
    <citation type="journal article" date="2004" name="Plant Physiol.">
        <title>Immunophilins and parvulins. Superfamily of peptidyl prolyl isomerases in Arabidopsis.</title>
        <authorList>
            <person name="He Z."/>
            <person name="Li L."/>
            <person name="Luan S."/>
        </authorList>
    </citation>
    <scope>TISSUE SPECIFICITY</scope>
    <scope>GENE FAMILY</scope>
    <scope>NOMENCLATURE</scope>
</reference>
<reference key="11">
    <citation type="journal article" date="2004" name="Plant Physiol.">
        <title>The Arabidopsis cyclophilin gene family.</title>
        <authorList>
            <person name="Romano P.G.N."/>
            <person name="Horton P."/>
            <person name="Gray J.E."/>
        </authorList>
    </citation>
    <scope>GENE FAMILY</scope>
    <scope>NOMENCLATURE</scope>
</reference>
<reference key="12">
    <citation type="journal article" date="2008" name="Proc. Natl. Acad. Sci. U.S.A.">
        <title>A cyclophilin links redox and light signals to cysteine biosynthesis and stress responses in chloroplasts.</title>
        <authorList>
            <person name="Dominguez-Solis J.R."/>
            <person name="He Z."/>
            <person name="Lima A."/>
            <person name="Ting J."/>
            <person name="Buchanan B.B."/>
            <person name="Luan S."/>
        </authorList>
    </citation>
    <scope>FUNCTION</scope>
    <scope>DISRUPTION PHENOTYPE</scope>
    <scope>INTERACTION WITH SAT1</scope>
    <source>
        <strain>cv. Columbia</strain>
    </source>
</reference>
<reference key="13">
    <citation type="journal article" date="2013" name="Proc. Natl. Acad. Sci. U.S.A.">
        <title>Cyclophilin 20-3 relays a 12-oxo-phytodienoic acid signal during stress responsive regulation of cellular redox homeostasis.</title>
        <authorList>
            <person name="Park S.W."/>
            <person name="Li W."/>
            <person name="Viehhauser A."/>
            <person name="He B."/>
            <person name="Kim S."/>
            <person name="Nilsson A.K."/>
            <person name="Andersson M.X."/>
            <person name="Kittle J.D."/>
            <person name="Ambavaram M.M."/>
            <person name="Luan S."/>
            <person name="Esker A.R."/>
            <person name="Tholl D."/>
            <person name="Cimini D."/>
            <person name="Ellerstrom M."/>
            <person name="Coaker G."/>
            <person name="Mitchell T.K."/>
            <person name="Pereira A."/>
            <person name="Dietz K.J."/>
            <person name="Lawrence C.B."/>
        </authorList>
    </citation>
    <scope>FUNCTION</scope>
</reference>
<gene>
    <name type="primary">CYP20-3</name>
    <name type="synonym">ROC4</name>
    <name type="ordered locus">At3g62030</name>
    <name type="ORF">F21F14.200</name>
</gene>
<accession>P34791</accession>
<accession>Q8LBZ9</accession>
<accession>Q9FPH5</accession>
<organism>
    <name type="scientific">Arabidopsis thaliana</name>
    <name type="common">Mouse-ear cress</name>
    <dbReference type="NCBI Taxonomy" id="3702"/>
    <lineage>
        <taxon>Eukaryota</taxon>
        <taxon>Viridiplantae</taxon>
        <taxon>Streptophyta</taxon>
        <taxon>Embryophyta</taxon>
        <taxon>Tracheophyta</taxon>
        <taxon>Spermatophyta</taxon>
        <taxon>Magnoliopsida</taxon>
        <taxon>eudicotyledons</taxon>
        <taxon>Gunneridae</taxon>
        <taxon>Pentapetalae</taxon>
        <taxon>rosids</taxon>
        <taxon>malvids</taxon>
        <taxon>Brassicales</taxon>
        <taxon>Brassicaceae</taxon>
        <taxon>Camelineae</taxon>
        <taxon>Arabidopsis</taxon>
    </lineage>
</organism>
<comment type="function">
    <text evidence="5 6">PPIases accelerate the folding of proteins. It catalyzes the cis-trans isomerization of proline imidic peptide bonds in oligopeptides. Required for the light-induced increase of thiol accumulation. Assists the folding or assembly of SAT1 enzyme to form the cysteine synthase complex. Links light and redox signals to the regulation of cysteine biosynthesis in response to stress.</text>
</comment>
<comment type="catalytic activity">
    <reaction>
        <text>[protein]-peptidylproline (omega=180) = [protein]-peptidylproline (omega=0)</text>
        <dbReference type="Rhea" id="RHEA:16237"/>
        <dbReference type="Rhea" id="RHEA-COMP:10747"/>
        <dbReference type="Rhea" id="RHEA-COMP:10748"/>
        <dbReference type="ChEBI" id="CHEBI:83833"/>
        <dbReference type="ChEBI" id="CHEBI:83834"/>
        <dbReference type="EC" id="5.2.1.8"/>
    </reaction>
</comment>
<comment type="activity regulation">
    <text evidence="3">Binds cyclosporin A (CsA). CsA mediates some of its effects via an inhibitory action on PPIase. PPIase activity is optimal in reduced form and minimal in oxidized form. Reduction of the oxidized form is mediated by thioredoxin (TRX-M).</text>
</comment>
<comment type="subunit">
    <text evidence="5 9">Interacts with SAT1 and A.tumefaciens VirD2.</text>
</comment>
<comment type="interaction">
    <interactant intactId="EBI-449385">
        <id>P34791</id>
    </interactant>
    <interactant intactId="EBI-2025397">
        <id>Q9SV07</id>
        <label>ASAT1</label>
    </interactant>
    <organismsDiffer>false</organismsDiffer>
    <experiments>3</experiments>
</comment>
<comment type="interaction">
    <interactant intactId="EBI-449385">
        <id>P34791</id>
    </interactant>
    <interactant intactId="EBI-1633480">
        <id>Q42588</id>
        <label>SAT1</label>
    </interactant>
    <organismsDiffer>false</organismsDiffer>
    <experiments>3</experiments>
</comment>
<comment type="subcellular location">
    <subcellularLocation>
        <location evidence="2 7">Plastid</location>
        <location evidence="2 7">Chloroplast stroma</location>
    </subcellularLocation>
    <text>Probably associated to membranes.</text>
</comment>
<comment type="alternative products">
    <event type="alternative splicing"/>
    <isoform>
        <id>P34791-1</id>
        <name>1</name>
        <sequence type="displayed"/>
    </isoform>
    <text>A number of isoforms are produced. According to EST sequences.</text>
</comment>
<comment type="tissue specificity">
    <text evidence="4 7">Ubiquitous, mostly expressed in leaves and flowers.</text>
</comment>
<comment type="induction">
    <text evidence="8">Strongly induced by light.</text>
</comment>
<comment type="disruption phenotype">
    <text evidence="5">Hypersensitivity to high light and rose bengal.</text>
</comment>
<comment type="similarity">
    <text evidence="10">Belongs to the cyclophilin-type PPIase family.</text>
</comment>
<sequence>MASSSSMQMVHTSRSIAQIGFGVKSQLVSANRTTQSVCFGARSSGIALSSRLHYASPIKQFSGVYATTKHQRTACVKSMAAEEEEVIEPQAKVTNKVYFDVEIGGEVAGRIVMGLFGEVVPKTVENFRALCTGEKKYGYKGSSFHRIIKDFMIQGGDFTEGNGTGGISIYGAKFEDENFTLKHTGPGILSMANAGPNTNGSQFFICTVKTSWLDNKHVVFGQVIEGMKLVRTLESQETRAFDVPKKGCRIYACGELPLDA</sequence>
<protein>
    <recommendedName>
        <fullName>Peptidyl-prolyl cis-trans isomerase CYP20-3, chloroplastic</fullName>
        <shortName>PPIase CYP20-3</shortName>
        <ecNumber>5.2.1.8</ecNumber>
    </recommendedName>
    <alternativeName>
        <fullName>Cyclophilin of 20 kDa 3</fullName>
    </alternativeName>
    <alternativeName>
        <fullName>Cyclosporin A-binding protein</fullName>
    </alternativeName>
    <alternativeName>
        <fullName>Rotamase CYP20-3</fullName>
    </alternativeName>
    <alternativeName>
        <fullName>Rotamase cyclophilin-4</fullName>
    </alternativeName>
</protein>
<evidence type="ECO:0000255" key="1">
    <source>
        <dbReference type="PROSITE-ProRule" id="PRU00156"/>
    </source>
</evidence>
<evidence type="ECO:0000269" key="2">
    <source>
    </source>
</evidence>
<evidence type="ECO:0000269" key="3">
    <source>
    </source>
</evidence>
<evidence type="ECO:0000269" key="4">
    <source>
    </source>
</evidence>
<evidence type="ECO:0000269" key="5">
    <source>
    </source>
</evidence>
<evidence type="ECO:0000269" key="6">
    <source>
    </source>
</evidence>
<evidence type="ECO:0000269" key="7">
    <source>
    </source>
</evidence>
<evidence type="ECO:0000269" key="8">
    <source>
    </source>
</evidence>
<evidence type="ECO:0000269" key="9">
    <source>
    </source>
</evidence>
<evidence type="ECO:0000305" key="10"/>
<proteinExistence type="evidence at protein level"/>